<dbReference type="EMBL" id="CP001114">
    <property type="protein sequence ID" value="ACO47363.1"/>
    <property type="molecule type" value="Genomic_DNA"/>
</dbReference>
<dbReference type="RefSeq" id="WP_012694484.1">
    <property type="nucleotide sequence ID" value="NC_012526.1"/>
</dbReference>
<dbReference type="SMR" id="C1D094"/>
<dbReference type="STRING" id="546414.Deide_23290"/>
<dbReference type="PaxDb" id="546414-Deide_23290"/>
<dbReference type="KEGG" id="ddr:Deide_23290"/>
<dbReference type="eggNOG" id="COG1160">
    <property type="taxonomic scope" value="Bacteria"/>
</dbReference>
<dbReference type="HOGENOM" id="CLU_016077_6_2_0"/>
<dbReference type="OrthoDB" id="9805918at2"/>
<dbReference type="Proteomes" id="UP000002208">
    <property type="component" value="Chromosome"/>
</dbReference>
<dbReference type="GO" id="GO:0005525">
    <property type="term" value="F:GTP binding"/>
    <property type="evidence" value="ECO:0007669"/>
    <property type="project" value="UniProtKB-UniRule"/>
</dbReference>
<dbReference type="GO" id="GO:0043022">
    <property type="term" value="F:ribosome binding"/>
    <property type="evidence" value="ECO:0007669"/>
    <property type="project" value="TreeGrafter"/>
</dbReference>
<dbReference type="GO" id="GO:0042254">
    <property type="term" value="P:ribosome biogenesis"/>
    <property type="evidence" value="ECO:0007669"/>
    <property type="project" value="UniProtKB-KW"/>
</dbReference>
<dbReference type="CDD" id="cd01894">
    <property type="entry name" value="EngA1"/>
    <property type="match status" value="1"/>
</dbReference>
<dbReference type="CDD" id="cd01895">
    <property type="entry name" value="EngA2"/>
    <property type="match status" value="1"/>
</dbReference>
<dbReference type="FunFam" id="3.30.300.20:FF:000004">
    <property type="entry name" value="GTPase Der"/>
    <property type="match status" value="1"/>
</dbReference>
<dbReference type="FunFam" id="3.40.50.300:FF:000953">
    <property type="entry name" value="GTPase Der"/>
    <property type="match status" value="1"/>
</dbReference>
<dbReference type="FunFam" id="3.40.50.300:FF:000494">
    <property type="entry name" value="tRNA modification GTPase MnmE"/>
    <property type="match status" value="1"/>
</dbReference>
<dbReference type="Gene3D" id="3.30.300.20">
    <property type="match status" value="1"/>
</dbReference>
<dbReference type="Gene3D" id="3.40.50.300">
    <property type="entry name" value="P-loop containing nucleotide triphosphate hydrolases"/>
    <property type="match status" value="2"/>
</dbReference>
<dbReference type="HAMAP" id="MF_00195">
    <property type="entry name" value="GTPase_Der"/>
    <property type="match status" value="1"/>
</dbReference>
<dbReference type="InterPro" id="IPR031166">
    <property type="entry name" value="G_ENGA"/>
</dbReference>
<dbReference type="InterPro" id="IPR006073">
    <property type="entry name" value="GTP-bd"/>
</dbReference>
<dbReference type="InterPro" id="IPR016484">
    <property type="entry name" value="GTPase_Der"/>
</dbReference>
<dbReference type="InterPro" id="IPR032859">
    <property type="entry name" value="KH_dom-like"/>
</dbReference>
<dbReference type="InterPro" id="IPR015946">
    <property type="entry name" value="KH_dom-like_a/b"/>
</dbReference>
<dbReference type="InterPro" id="IPR027417">
    <property type="entry name" value="P-loop_NTPase"/>
</dbReference>
<dbReference type="InterPro" id="IPR005225">
    <property type="entry name" value="Small_GTP-bd"/>
</dbReference>
<dbReference type="NCBIfam" id="TIGR03594">
    <property type="entry name" value="GTPase_EngA"/>
    <property type="match status" value="1"/>
</dbReference>
<dbReference type="NCBIfam" id="TIGR00231">
    <property type="entry name" value="small_GTP"/>
    <property type="match status" value="2"/>
</dbReference>
<dbReference type="PANTHER" id="PTHR43834">
    <property type="entry name" value="GTPASE DER"/>
    <property type="match status" value="1"/>
</dbReference>
<dbReference type="PANTHER" id="PTHR43834:SF6">
    <property type="entry name" value="GTPASE DER"/>
    <property type="match status" value="1"/>
</dbReference>
<dbReference type="Pfam" id="PF14714">
    <property type="entry name" value="KH_dom-like"/>
    <property type="match status" value="1"/>
</dbReference>
<dbReference type="Pfam" id="PF01926">
    <property type="entry name" value="MMR_HSR1"/>
    <property type="match status" value="2"/>
</dbReference>
<dbReference type="PIRSF" id="PIRSF006485">
    <property type="entry name" value="GTP-binding_EngA"/>
    <property type="match status" value="1"/>
</dbReference>
<dbReference type="PRINTS" id="PR00326">
    <property type="entry name" value="GTP1OBG"/>
</dbReference>
<dbReference type="SUPFAM" id="SSF52540">
    <property type="entry name" value="P-loop containing nucleoside triphosphate hydrolases"/>
    <property type="match status" value="2"/>
</dbReference>
<dbReference type="PROSITE" id="PS51712">
    <property type="entry name" value="G_ENGA"/>
    <property type="match status" value="2"/>
</dbReference>
<accession>C1D094</accession>
<keyword id="KW-0342">GTP-binding</keyword>
<keyword id="KW-0547">Nucleotide-binding</keyword>
<keyword id="KW-1185">Reference proteome</keyword>
<keyword id="KW-0677">Repeat</keyword>
<keyword id="KW-0690">Ribosome biogenesis</keyword>
<comment type="function">
    <text evidence="1">GTPase that plays an essential role in the late steps of ribosome biogenesis.</text>
</comment>
<comment type="subunit">
    <text evidence="1">Associates with the 50S ribosomal subunit.</text>
</comment>
<comment type="similarity">
    <text evidence="1">Belongs to the TRAFAC class TrmE-Era-EngA-EngB-Septin-like GTPase superfamily. EngA (Der) GTPase family.</text>
</comment>
<evidence type="ECO:0000255" key="1">
    <source>
        <dbReference type="HAMAP-Rule" id="MF_00195"/>
    </source>
</evidence>
<name>DER_DEIDV</name>
<gene>
    <name evidence="1" type="primary">der</name>
    <name type="synonym">engA</name>
    <name type="ordered locus">Deide_23290</name>
</gene>
<feature type="chain" id="PRO_1000204031" description="GTPase Der">
    <location>
        <begin position="1"/>
        <end position="441"/>
    </location>
</feature>
<feature type="domain" description="EngA-type G 1">
    <location>
        <begin position="2"/>
        <end position="164"/>
    </location>
</feature>
<feature type="domain" description="EngA-type G 2">
    <location>
        <begin position="173"/>
        <end position="343"/>
    </location>
</feature>
<feature type="binding site" evidence="1">
    <location>
        <begin position="8"/>
        <end position="15"/>
    </location>
    <ligand>
        <name>GTP</name>
        <dbReference type="ChEBI" id="CHEBI:37565"/>
        <label>1</label>
    </ligand>
</feature>
<feature type="binding site" evidence="1">
    <location>
        <begin position="55"/>
        <end position="59"/>
    </location>
    <ligand>
        <name>GTP</name>
        <dbReference type="ChEBI" id="CHEBI:37565"/>
        <label>1</label>
    </ligand>
</feature>
<feature type="binding site" evidence="1">
    <location>
        <begin position="116"/>
        <end position="119"/>
    </location>
    <ligand>
        <name>GTP</name>
        <dbReference type="ChEBI" id="CHEBI:37565"/>
        <label>1</label>
    </ligand>
</feature>
<feature type="binding site" evidence="1">
    <location>
        <begin position="179"/>
        <end position="186"/>
    </location>
    <ligand>
        <name>GTP</name>
        <dbReference type="ChEBI" id="CHEBI:37565"/>
        <label>2</label>
    </ligand>
</feature>
<feature type="binding site" evidence="1">
    <location>
        <begin position="226"/>
        <end position="230"/>
    </location>
    <ligand>
        <name>GTP</name>
        <dbReference type="ChEBI" id="CHEBI:37565"/>
        <label>2</label>
    </ligand>
</feature>
<feature type="binding site" evidence="1">
    <location>
        <begin position="288"/>
        <end position="291"/>
    </location>
    <ligand>
        <name>GTP</name>
        <dbReference type="ChEBI" id="CHEBI:37565"/>
        <label>2</label>
    </ligand>
</feature>
<protein>
    <recommendedName>
        <fullName evidence="1">GTPase Der</fullName>
    </recommendedName>
    <alternativeName>
        <fullName evidence="1">GTP-binding protein EngA</fullName>
    </alternativeName>
</protein>
<proteinExistence type="inferred from homology"/>
<organism>
    <name type="scientific">Deinococcus deserti (strain DSM 17065 / CIP 109153 / LMG 22923 / VCD115)</name>
    <dbReference type="NCBI Taxonomy" id="546414"/>
    <lineage>
        <taxon>Bacteria</taxon>
        <taxon>Thermotogati</taxon>
        <taxon>Deinococcota</taxon>
        <taxon>Deinococci</taxon>
        <taxon>Deinococcales</taxon>
        <taxon>Deinococcaceae</taxon>
        <taxon>Deinococcus</taxon>
    </lineage>
</organism>
<sequence length="441" mass="49805">MHKVAIVGRPNVGKSSLFNRLIGRREAVVADFPGVTRDAKEGLMLYHNHRITLVDTGGLWSGDEWEAAIREKAEWAMEGAQAVVFVLDPREGLSAADYEVADWLRRVGKPVIVVANKIDSPKHEVYLAELWGLGFGDPVAISAEHARGLDELLDRVMTHLPADDEDVPEVAPIRISLIGRPNVGKSSLLNAITNTDRAIVADQPGTTRDSLDVEWDFGGQRFVLVDTAGIRKKPDTAIEDYAIQRSQAAIQRSDLIWLVVNATDMGDHELKLANLAYESGKPVIVVVNKWDLVPDEELKRTEKDLNQKLHHISFAPRVYTSAINDYGIHEMLAEAMKLHDKWQSRIPTSELNRWLEVWQMRQAVPNFHGKKLKMYFMTQVETAPPTFAIFCNRADFVTRAYEGYLQNRIREDLQLAGVPVRLKWNEKGPYKRGKKDEDSED</sequence>
<reference key="1">
    <citation type="journal article" date="2009" name="PLoS Genet.">
        <title>Alliance of proteomics and genomics to unravel the specificities of Sahara bacterium Deinococcus deserti.</title>
        <authorList>
            <person name="de Groot A."/>
            <person name="Dulermo R."/>
            <person name="Ortet P."/>
            <person name="Blanchard L."/>
            <person name="Guerin P."/>
            <person name="Fernandez B."/>
            <person name="Vacherie B."/>
            <person name="Dossat C."/>
            <person name="Jolivet E."/>
            <person name="Siguier P."/>
            <person name="Chandler M."/>
            <person name="Barakat M."/>
            <person name="Dedieu A."/>
            <person name="Barbe V."/>
            <person name="Heulin T."/>
            <person name="Sommer S."/>
            <person name="Achouak W."/>
            <person name="Armengaud J."/>
        </authorList>
    </citation>
    <scope>NUCLEOTIDE SEQUENCE [LARGE SCALE GENOMIC DNA]</scope>
    <source>
        <strain>DSM 17065 / CIP 109153 / LMG 22923 / VCD115</strain>
    </source>
</reference>